<protein>
    <recommendedName>
        <fullName>PII-type proteinase</fullName>
        <ecNumber>3.4.21.96</ecNumber>
    </recommendedName>
    <alternativeName>
        <fullName>Cell wall-associated serine proteinase</fullName>
    </alternativeName>
    <alternativeName>
        <fullName>LP151</fullName>
    </alternativeName>
    <alternativeName>
        <fullName>Lactocepin</fullName>
    </alternativeName>
</protein>
<proteinExistence type="evidence at protein level"/>
<keyword id="KW-0134">Cell wall</keyword>
<keyword id="KW-0903">Direct protein sequencing</keyword>
<keyword id="KW-0378">Hydrolase</keyword>
<keyword id="KW-0572">Peptidoglycan-anchor</keyword>
<keyword id="KW-0645">Protease</keyword>
<keyword id="KW-0677">Repeat</keyword>
<keyword id="KW-0964">Secreted</keyword>
<keyword id="KW-0720">Serine protease</keyword>
<keyword id="KW-0732">Signal</keyword>
<keyword id="KW-0865">Zymogen</keyword>
<feature type="signal peptide" evidence="1">
    <location>
        <begin position="1"/>
        <end position="33"/>
    </location>
</feature>
<feature type="propeptide" id="PRO_0000027092" evidence="1">
    <location>
        <begin position="34"/>
        <end position="187"/>
    </location>
</feature>
<feature type="chain" id="PRO_0000027093" description="PII-type proteinase">
    <location>
        <begin position="188"/>
        <end position="1870"/>
    </location>
</feature>
<feature type="propeptide" id="PRO_0000027094" description="Removed by sortase" evidence="2">
    <location>
        <begin position="1871"/>
        <end position="1902"/>
    </location>
</feature>
<feature type="domain" description="Peptidase S8" evidence="3">
    <location>
        <begin position="191"/>
        <end position="697"/>
    </location>
</feature>
<feature type="region of interest" description="Disordered" evidence="4">
    <location>
        <begin position="1793"/>
        <end position="1872"/>
    </location>
</feature>
<feature type="short sequence motif" description="LPXTG sorting signal" evidence="2">
    <location>
        <begin position="1867"/>
        <end position="1871"/>
    </location>
</feature>
<feature type="compositionally biased region" description="Low complexity" evidence="4">
    <location>
        <begin position="1793"/>
        <end position="1805"/>
    </location>
</feature>
<feature type="active site" description="Charge relay system" evidence="3">
    <location>
        <position position="217"/>
    </location>
</feature>
<feature type="active site" description="Charge relay system" evidence="3">
    <location>
        <position position="281"/>
    </location>
</feature>
<feature type="active site" description="Charge relay system" evidence="3">
    <location>
        <position position="620"/>
    </location>
</feature>
<feature type="modified residue" description="Pentaglycyl murein peptidoglycan amidated threonine" evidence="2">
    <location>
        <position position="1870"/>
    </location>
</feature>
<name>P2P_LACPA</name>
<accession>Q02470</accession>
<reference key="1">
    <citation type="journal article" date="1992" name="J. Gen. Microbiol.">
        <title>Cloning, sequencing and expression of the gene encoding the cell-envelope-associated proteinase from Lactobacillus paracasei subsp. paracasei NCDO 151.</title>
        <authorList>
            <person name="Holck A."/>
            <person name="Naes H."/>
        </authorList>
    </citation>
    <scope>NUCLEOTIDE SEQUENCE [GENOMIC DNA]</scope>
    <source>
        <strain>ATCC 25302 / DSM 5622 / BCRC 12248 / JCM 8130 / KCTC 3510 / LMG 13087 / NBRC 15889 / NCDO 151 / RO94</strain>
    </source>
</reference>
<reference key="2">
    <citation type="journal article" date="1992" name="J. Gen. Microbiol.">
        <title>Purification and N-terminal amino acid sequence determination of the cell-wall-bound proteinase from Lactobacillus paracasei subsp. paracasei.</title>
        <authorList>
            <person name="Naes H."/>
            <person name="Nissen-Meyer J."/>
        </authorList>
    </citation>
    <scope>PROTEIN SEQUENCE OF 189-196</scope>
</reference>
<comment type="function">
    <text>Protease which breaks down milk proteins during the growth of the bacteria on milk.</text>
</comment>
<comment type="catalytic activity">
    <reaction>
        <text>Endopeptidase activity with very broad specificity, although some subsite preference have been noted, e.g. large hydrophobic residues in the P1 and P4 positions, and Pro in the P2 position. Best known for its action on caseins, although it has been shown to hydrolyze hemoglobin and oxidized insulin B-chain.</text>
        <dbReference type="EC" id="3.4.21.96"/>
    </reaction>
</comment>
<comment type="subcellular location">
    <subcellularLocation>
        <location evidence="2">Secreted</location>
        <location evidence="2">Cell wall</location>
        <topology evidence="2">Peptidoglycan-anchor</topology>
    </subcellularLocation>
</comment>
<comment type="similarity">
    <text evidence="5">Belongs to the peptidase S8 family.</text>
</comment>
<organism>
    <name type="scientific">Lacticaseibacillus paracasei</name>
    <name type="common">Lactobacillus paracasei</name>
    <dbReference type="NCBI Taxonomy" id="1597"/>
    <lineage>
        <taxon>Bacteria</taxon>
        <taxon>Bacillati</taxon>
        <taxon>Bacillota</taxon>
        <taxon>Bacilli</taxon>
        <taxon>Lactobacillales</taxon>
        <taxon>Lactobacillaceae</taxon>
        <taxon>Lacticaseibacillus</taxon>
    </lineage>
</organism>
<evidence type="ECO:0000255" key="1"/>
<evidence type="ECO:0000255" key="2">
    <source>
        <dbReference type="PROSITE-ProRule" id="PRU00477"/>
    </source>
</evidence>
<evidence type="ECO:0000255" key="3">
    <source>
        <dbReference type="PROSITE-ProRule" id="PRU01240"/>
    </source>
</evidence>
<evidence type="ECO:0000256" key="4">
    <source>
        <dbReference type="SAM" id="MobiDB-lite"/>
    </source>
</evidence>
<evidence type="ECO:0000305" key="5"/>
<sequence length="1902" mass="200253">MQRKKKGLSILLAGTVALGALAVLPVGEIQAKAAISQQTKVSSLANTVKAATAKQAATDTTAATTNQAIATQLAAKGIDYNKLNKVQQQDTYVDVIVQMSAAPASENGTLRTDYSSTAEIQQETNKVIAAQASVKAAVEQVTQQTAGESYGYVVNGFSTKVRVVDIPKLKQIAGVKTVTLAKVYYPTDAKANSMANVQAVWSNYKYKGEGTVVSVIDTGIDPTHKDMRLSDDKDVKLTKYDVEKFTDTAKHGRYFTSKVPYGFNYADNNDTITDDTVDEQHGMHVAGIIGANGTGDDPTKSVVGVAPEAQLLAMKVFTNSDTSATTGSATLVSAIEDSAKIGADVLNMSLGSDSGNQTLEDPEIAAVQNANESGTAAVISAGNSGTSGSATQGVNKDYYGLQDNEMVGTPGTSRGATTVASAENTDVISQAVTITDGKDLQLGPETIQLSSNDFTGSFDQKKFYVVKDASGDLSKGAAADYTADAKGKIAIVKRGELNFADKQKYAQAAGAAGLIIVNNDGTATPLTSIRLTTTFPTFGLSSKTGQKLVDWVTAHPDDSLGVKIALTLLPNQKYTEDKMSDFTSYGPVSNLSFKPDITAPGGNIWSTQNNNGYTNMSGTSMASPFIAGSQALLKQALNNKNNPFYADYKQLKGTALTDFLKTVEMNTAQPINDINYNNVIVSPRRQGAGLVDVKAAIDALEKNPSTVVAENGYPAVELKDFTSTDKTFKLTFTNRTTHELTYQMDSNTDTNAVYTSATDPNSGVLYDKKIDGAAIKAGSDITVPAGKTAQIEFTLSLPKSFDQQQFVEGFLNFKGSDGSRLNLPYMGFFGDWNDGKIVDSLNGITYSPAGGNYGTVPLLTNKNTGHQYYGGMVTDADGKQTVDDQAIAFSSDKNALYNDISMQYYLLRNISNVQVDILDGQGNKVTTLSSSTNQTKTYYDAHSQKYIYYNAPAWDGTYYDQRDGNIKTADDGSYTYRISGVPEGGDKRQVFDVPFKLDSKAPTVRHVALSAKTENGKTQYYLTAEAKDDLSGLDATKSVKTAINEVTNLDATFTDAGTTADGYTKIETPLSDEQAQALGNGDNSAELYLTDNASNATNQDASVQKPGSTSFDLIVNGGGIPDKISSTTTGYEANTQGGGTYTFSGTYPAAVDGTYTDAQGKKHDLNTTYDAATNSFTASMAVTNADYAAQVDLYADKAHTQLLKHFDTKVRLTAPTFTDLKFNNGSDQTSEATIKVTGTVSSDTKTVNVGDTVAALDAQHHFSVDVPVNYGDNTIKVTATDEDGNTTTEQKTITSSYDPDVLKNAVTFDQGVKFGANEFNATSAKFYDPKTGIATITGKVKHPTTTLQVDGKQISIKNDLTFSFTLDLGTLGQKPFGVVVGDTTQNKTFQEALTFILDAVAPTLSLDSSTDAPVYTNDPNFQITGTATDNAQYLSLAINGSHVASQYADININSGKPGHMAIDQPVKLLEGKNVLTVAVTDSENNTTTKKITVYYEPKKTLAAPTVTPSTTEPAKTVTLTANAAATGETVQYSADGGKTYQDVPAAGVTVTANGTFKFKSTDLYGNESPAVDYVVTNIKADDPAQLQTAKQALTNLIASAKTLSASGKYDDATTTALAAATQKAQTALDQTDASVDSLTGANRDLQTAINQLAAKLPADKKTSLLNQLQSVKAALGTDLGNQTDPSTGKTFTAALDDLVAQAQAGTQTADQLQASLAKVLDAVLAKLAEGIKAATPAEVGNAKDAATGKTWYADIADTLTSGQASADASDKLAHLQALQSLKTKVAAAVEAAKTAGKGDDTTGTSDKGGGQGTPAPAPGDTGKDKGDEGSQPSSGGNIPTKPATTTSTSTDDTTDRNGQHTSGKGALPKTAETTERPAFGFLGVIVVSLMGVLGLKRKQREE</sequence>
<gene>
    <name type="primary">prtP</name>
</gene>
<dbReference type="EC" id="3.4.21.96"/>
<dbReference type="EMBL" id="M83946">
    <property type="protein sequence ID" value="AAA25248.1"/>
    <property type="molecule type" value="Genomic_DNA"/>
</dbReference>
<dbReference type="PIR" id="B44858">
    <property type="entry name" value="B44858"/>
</dbReference>
<dbReference type="RefSeq" id="WP_003661853.1">
    <property type="nucleotide sequence ID" value="NZ_JACEIM010000004.1"/>
</dbReference>
<dbReference type="SMR" id="Q02470"/>
<dbReference type="MEROPS" id="S08.019"/>
<dbReference type="GO" id="GO:0005576">
    <property type="term" value="C:extracellular region"/>
    <property type="evidence" value="ECO:0007669"/>
    <property type="project" value="UniProtKB-KW"/>
</dbReference>
<dbReference type="GO" id="GO:0016020">
    <property type="term" value="C:membrane"/>
    <property type="evidence" value="ECO:0007669"/>
    <property type="project" value="InterPro"/>
</dbReference>
<dbReference type="GO" id="GO:0004252">
    <property type="term" value="F:serine-type endopeptidase activity"/>
    <property type="evidence" value="ECO:0007669"/>
    <property type="project" value="InterPro"/>
</dbReference>
<dbReference type="GO" id="GO:0006508">
    <property type="term" value="P:proteolysis"/>
    <property type="evidence" value="ECO:0007669"/>
    <property type="project" value="UniProtKB-KW"/>
</dbReference>
<dbReference type="CDD" id="cd07475">
    <property type="entry name" value="Peptidases_S8_C5a_Peptidase"/>
    <property type="match status" value="1"/>
</dbReference>
<dbReference type="Gene3D" id="2.60.40.4070">
    <property type="match status" value="1"/>
</dbReference>
<dbReference type="Gene3D" id="3.50.30.30">
    <property type="match status" value="1"/>
</dbReference>
<dbReference type="Gene3D" id="2.60.40.10">
    <property type="entry name" value="Immunoglobulins"/>
    <property type="match status" value="2"/>
</dbReference>
<dbReference type="Gene3D" id="3.40.50.200">
    <property type="entry name" value="Peptidase S8/S53 domain"/>
    <property type="match status" value="1"/>
</dbReference>
<dbReference type="Gene3D" id="2.60.40.1710">
    <property type="entry name" value="Subtilisin-like superfamily"/>
    <property type="match status" value="1"/>
</dbReference>
<dbReference type="InterPro" id="IPR010435">
    <property type="entry name" value="C5a/SBT2-like_Fn3"/>
</dbReference>
<dbReference type="InterPro" id="IPR034216">
    <property type="entry name" value="C5a_Peptidase"/>
</dbReference>
<dbReference type="InterPro" id="IPR013783">
    <property type="entry name" value="Ig-like_fold"/>
</dbReference>
<dbReference type="InterPro" id="IPR019931">
    <property type="entry name" value="LPXTG_anchor"/>
</dbReference>
<dbReference type="InterPro" id="IPR046450">
    <property type="entry name" value="PA_dom_sf"/>
</dbReference>
<dbReference type="InterPro" id="IPR003137">
    <property type="entry name" value="PA_domain"/>
</dbReference>
<dbReference type="InterPro" id="IPR000209">
    <property type="entry name" value="Peptidase_S8/S53_dom"/>
</dbReference>
<dbReference type="InterPro" id="IPR036852">
    <property type="entry name" value="Peptidase_S8/S53_dom_sf"/>
</dbReference>
<dbReference type="InterPro" id="IPR023827">
    <property type="entry name" value="Peptidase_S8_Asp-AS"/>
</dbReference>
<dbReference type="InterPro" id="IPR022398">
    <property type="entry name" value="Peptidase_S8_His-AS"/>
</dbReference>
<dbReference type="InterPro" id="IPR023828">
    <property type="entry name" value="Peptidase_S8_Ser-AS"/>
</dbReference>
<dbReference type="InterPro" id="IPR050131">
    <property type="entry name" value="Peptidase_S8_subtilisin-like"/>
</dbReference>
<dbReference type="InterPro" id="IPR015500">
    <property type="entry name" value="Peptidase_S8_subtilisin-rel"/>
</dbReference>
<dbReference type="PANTHER" id="PTHR43806:SF11">
    <property type="entry name" value="CEREVISIN-RELATED"/>
    <property type="match status" value="1"/>
</dbReference>
<dbReference type="PANTHER" id="PTHR43806">
    <property type="entry name" value="PEPTIDASE S8"/>
    <property type="match status" value="1"/>
</dbReference>
<dbReference type="Pfam" id="PF06280">
    <property type="entry name" value="fn3_5"/>
    <property type="match status" value="1"/>
</dbReference>
<dbReference type="Pfam" id="PF09136">
    <property type="entry name" value="Glucodextran_B"/>
    <property type="match status" value="1"/>
</dbReference>
<dbReference type="Pfam" id="PF00746">
    <property type="entry name" value="Gram_pos_anchor"/>
    <property type="match status" value="1"/>
</dbReference>
<dbReference type="Pfam" id="PF02225">
    <property type="entry name" value="PA"/>
    <property type="match status" value="1"/>
</dbReference>
<dbReference type="Pfam" id="PF00082">
    <property type="entry name" value="Peptidase_S8"/>
    <property type="match status" value="1"/>
</dbReference>
<dbReference type="PRINTS" id="PR00723">
    <property type="entry name" value="SUBTILISIN"/>
</dbReference>
<dbReference type="SUPFAM" id="SSF52025">
    <property type="entry name" value="PA domain"/>
    <property type="match status" value="1"/>
</dbReference>
<dbReference type="SUPFAM" id="SSF52743">
    <property type="entry name" value="Subtilisin-like"/>
    <property type="match status" value="1"/>
</dbReference>
<dbReference type="PROSITE" id="PS50847">
    <property type="entry name" value="GRAM_POS_ANCHORING"/>
    <property type="match status" value="1"/>
</dbReference>
<dbReference type="PROSITE" id="PS51892">
    <property type="entry name" value="SUBTILASE"/>
    <property type="match status" value="1"/>
</dbReference>
<dbReference type="PROSITE" id="PS00136">
    <property type="entry name" value="SUBTILASE_ASP"/>
    <property type="match status" value="1"/>
</dbReference>
<dbReference type="PROSITE" id="PS00137">
    <property type="entry name" value="SUBTILASE_HIS"/>
    <property type="match status" value="1"/>
</dbReference>
<dbReference type="PROSITE" id="PS00138">
    <property type="entry name" value="SUBTILASE_SER"/>
    <property type="match status" value="1"/>
</dbReference>